<reference key="1">
    <citation type="journal article" date="2008" name="PLoS Genet.">
        <title>Complete genome sequence of the N2-fixing broad host range endophyte Klebsiella pneumoniae 342 and virulence predictions verified in mice.</title>
        <authorList>
            <person name="Fouts D.E."/>
            <person name="Tyler H.L."/>
            <person name="DeBoy R.T."/>
            <person name="Daugherty S."/>
            <person name="Ren Q."/>
            <person name="Badger J.H."/>
            <person name="Durkin A.S."/>
            <person name="Huot H."/>
            <person name="Shrivastava S."/>
            <person name="Kothari S."/>
            <person name="Dodson R.J."/>
            <person name="Mohamoud Y."/>
            <person name="Khouri H."/>
            <person name="Roesch L.F.W."/>
            <person name="Krogfelt K.A."/>
            <person name="Struve C."/>
            <person name="Triplett E.W."/>
            <person name="Methe B.A."/>
        </authorList>
    </citation>
    <scope>NUCLEOTIDE SEQUENCE [LARGE SCALE GENOMIC DNA]</scope>
    <source>
        <strain>342</strain>
    </source>
</reference>
<organism>
    <name type="scientific">Klebsiella pneumoniae (strain 342)</name>
    <dbReference type="NCBI Taxonomy" id="507522"/>
    <lineage>
        <taxon>Bacteria</taxon>
        <taxon>Pseudomonadati</taxon>
        <taxon>Pseudomonadota</taxon>
        <taxon>Gammaproteobacteria</taxon>
        <taxon>Enterobacterales</taxon>
        <taxon>Enterobacteriaceae</taxon>
        <taxon>Klebsiella/Raoultella group</taxon>
        <taxon>Klebsiella</taxon>
        <taxon>Klebsiella pneumoniae complex</taxon>
    </lineage>
</organism>
<keyword id="KW-0255">Endonuclease</keyword>
<keyword id="KW-0269">Exonuclease</keyword>
<keyword id="KW-0378">Hydrolase</keyword>
<keyword id="KW-0479">Metal-binding</keyword>
<keyword id="KW-0540">Nuclease</keyword>
<keyword id="KW-0819">tRNA processing</keyword>
<keyword id="KW-0862">Zinc</keyword>
<feature type="chain" id="PRO_1000187964" description="Ribonuclease BN">
    <location>
        <begin position="1"/>
        <end position="306"/>
    </location>
</feature>
<feature type="active site" description="Proton acceptor" evidence="1">
    <location>
        <position position="68"/>
    </location>
</feature>
<feature type="binding site" evidence="1">
    <location>
        <position position="64"/>
    </location>
    <ligand>
        <name>Zn(2+)</name>
        <dbReference type="ChEBI" id="CHEBI:29105"/>
        <label>1</label>
        <note>catalytic</note>
    </ligand>
</feature>
<feature type="binding site" evidence="1">
    <location>
        <position position="66"/>
    </location>
    <ligand>
        <name>Zn(2+)</name>
        <dbReference type="ChEBI" id="CHEBI:29105"/>
        <label>1</label>
        <note>catalytic</note>
    </ligand>
</feature>
<feature type="binding site" evidence="1">
    <location>
        <position position="68"/>
    </location>
    <ligand>
        <name>Zn(2+)</name>
        <dbReference type="ChEBI" id="CHEBI:29105"/>
        <label>2</label>
        <note>catalytic</note>
    </ligand>
</feature>
<feature type="binding site" evidence="1">
    <location>
        <position position="69"/>
    </location>
    <ligand>
        <name>Zn(2+)</name>
        <dbReference type="ChEBI" id="CHEBI:29105"/>
        <label>2</label>
        <note>catalytic</note>
    </ligand>
</feature>
<feature type="binding site" evidence="1">
    <location>
        <position position="141"/>
    </location>
    <ligand>
        <name>Zn(2+)</name>
        <dbReference type="ChEBI" id="CHEBI:29105"/>
        <label>1</label>
        <note>catalytic</note>
    </ligand>
</feature>
<feature type="binding site" evidence="1">
    <location>
        <position position="212"/>
    </location>
    <ligand>
        <name>Zn(2+)</name>
        <dbReference type="ChEBI" id="CHEBI:29105"/>
        <label>1</label>
        <note>catalytic</note>
    </ligand>
</feature>
<feature type="binding site" evidence="1">
    <location>
        <position position="212"/>
    </location>
    <ligand>
        <name>Zn(2+)</name>
        <dbReference type="ChEBI" id="CHEBI:29105"/>
        <label>2</label>
        <note>catalytic</note>
    </ligand>
</feature>
<feature type="binding site" evidence="1">
    <location>
        <position position="270"/>
    </location>
    <ligand>
        <name>Zn(2+)</name>
        <dbReference type="ChEBI" id="CHEBI:29105"/>
        <label>2</label>
        <note>catalytic</note>
    </ligand>
</feature>
<name>RBN_KLEP3</name>
<comment type="function">
    <text evidence="1">Zinc phosphodiesterase, which has both exoribonuclease and endoribonuclease activities.</text>
</comment>
<comment type="cofactor">
    <cofactor evidence="1">
        <name>Zn(2+)</name>
        <dbReference type="ChEBI" id="CHEBI:29105"/>
    </cofactor>
    <text evidence="1">Binds 2 Zn(2+) ions.</text>
</comment>
<comment type="subunit">
    <text evidence="1">Homodimer.</text>
</comment>
<comment type="similarity">
    <text evidence="1">Belongs to the RNase Z family. RNase BN subfamily.</text>
</comment>
<gene>
    <name evidence="1" type="primary">rbn</name>
    <name type="synonym">rnz</name>
    <name type="ordered locus">KPK_1484</name>
</gene>
<dbReference type="EC" id="3.1.-.-" evidence="1"/>
<dbReference type="EMBL" id="CP000964">
    <property type="protein sequence ID" value="ACI09702.1"/>
    <property type="molecule type" value="Genomic_DNA"/>
</dbReference>
<dbReference type="SMR" id="B5XNW7"/>
<dbReference type="KEGG" id="kpe:KPK_1484"/>
<dbReference type="HOGENOM" id="CLU_031317_2_0_6"/>
<dbReference type="Proteomes" id="UP000001734">
    <property type="component" value="Chromosome"/>
</dbReference>
<dbReference type="GO" id="GO:0042781">
    <property type="term" value="F:3'-tRNA processing endoribonuclease activity"/>
    <property type="evidence" value="ECO:0007669"/>
    <property type="project" value="TreeGrafter"/>
</dbReference>
<dbReference type="GO" id="GO:0004527">
    <property type="term" value="F:exonuclease activity"/>
    <property type="evidence" value="ECO:0007669"/>
    <property type="project" value="UniProtKB-UniRule"/>
</dbReference>
<dbReference type="GO" id="GO:0008270">
    <property type="term" value="F:zinc ion binding"/>
    <property type="evidence" value="ECO:0007669"/>
    <property type="project" value="UniProtKB-UniRule"/>
</dbReference>
<dbReference type="CDD" id="cd07717">
    <property type="entry name" value="RNaseZ_ZiPD-like_MBL-fold"/>
    <property type="match status" value="1"/>
</dbReference>
<dbReference type="FunFam" id="3.60.15.10:FF:000002">
    <property type="entry name" value="Ribonuclease Z"/>
    <property type="match status" value="1"/>
</dbReference>
<dbReference type="Gene3D" id="3.60.15.10">
    <property type="entry name" value="Ribonuclease Z/Hydroxyacylglutathione hydrolase-like"/>
    <property type="match status" value="1"/>
</dbReference>
<dbReference type="HAMAP" id="MF_01818">
    <property type="entry name" value="RNase_Z_BN"/>
    <property type="match status" value="1"/>
</dbReference>
<dbReference type="InterPro" id="IPR001279">
    <property type="entry name" value="Metallo-B-lactamas"/>
</dbReference>
<dbReference type="InterPro" id="IPR036866">
    <property type="entry name" value="RibonucZ/Hydroxyglut_hydro"/>
</dbReference>
<dbReference type="InterPro" id="IPR013471">
    <property type="entry name" value="RNase_Z/BN"/>
</dbReference>
<dbReference type="NCBIfam" id="NF000800">
    <property type="entry name" value="PRK00055.1-1"/>
    <property type="match status" value="1"/>
</dbReference>
<dbReference type="NCBIfam" id="NF000801">
    <property type="entry name" value="PRK00055.1-3"/>
    <property type="match status" value="1"/>
</dbReference>
<dbReference type="NCBIfam" id="TIGR02651">
    <property type="entry name" value="RNase_Z"/>
    <property type="match status" value="1"/>
</dbReference>
<dbReference type="PANTHER" id="PTHR46018">
    <property type="entry name" value="ZINC PHOSPHODIESTERASE ELAC PROTEIN 1"/>
    <property type="match status" value="1"/>
</dbReference>
<dbReference type="PANTHER" id="PTHR46018:SF2">
    <property type="entry name" value="ZINC PHOSPHODIESTERASE ELAC PROTEIN 1"/>
    <property type="match status" value="1"/>
</dbReference>
<dbReference type="Pfam" id="PF12706">
    <property type="entry name" value="Lactamase_B_2"/>
    <property type="match status" value="1"/>
</dbReference>
<dbReference type="SUPFAM" id="SSF56281">
    <property type="entry name" value="Metallo-hydrolase/oxidoreductase"/>
    <property type="match status" value="1"/>
</dbReference>
<sequence>MELTFLGTSAGVPTRTRNMTSIILNLQQPTRAEMWLFDCGEGTQHQFLHTPYHPGKLNKIFITHLHGDHLFGLPGLLCSRSMQGNSLPLTLYGPKGLKEFVETALRLSGSWTDYPLTIIEVGPGLVFDEEGYRVTAYPLSHPVECYGYRIEQHDKPGTLDAAQLIADGVPPGPLFHQLKRGQRVTLEDGRVIDGSRYLGPATPGKTLAIFGDTAPCPQALEMARGADVMVHETTLEQAMAEKANSRGHSSSQQTAALAKEAGVGTLIATHFSSRYDAEGCLKMLAECREIFANTLLAEDFMVYKMA</sequence>
<proteinExistence type="inferred from homology"/>
<protein>
    <recommendedName>
        <fullName evidence="1">Ribonuclease BN</fullName>
        <shortName evidence="1">RNase BN</shortName>
        <ecNumber evidence="1">3.1.-.-</ecNumber>
    </recommendedName>
    <alternativeName>
        <fullName evidence="1">Ribonuclease Z homolog</fullName>
        <shortName evidence="1">RNase Z homolog</shortName>
    </alternativeName>
</protein>
<accession>B5XNW7</accession>
<evidence type="ECO:0000255" key="1">
    <source>
        <dbReference type="HAMAP-Rule" id="MF_01818"/>
    </source>
</evidence>